<dbReference type="EMBL" id="AJ721087">
    <property type="protein sequence ID" value="CAG32746.1"/>
    <property type="molecule type" value="mRNA"/>
</dbReference>
<dbReference type="RefSeq" id="NP_001006525.1">
    <property type="nucleotide sequence ID" value="NM_001006525.2"/>
</dbReference>
<dbReference type="SMR" id="Q5ZHP7"/>
<dbReference type="FunCoup" id="Q5ZHP7">
    <property type="interactions" value="108"/>
</dbReference>
<dbReference type="STRING" id="9031.ENSGALP00000032339"/>
<dbReference type="PaxDb" id="9031-ENSGALP00000032339"/>
<dbReference type="GeneID" id="424243"/>
<dbReference type="KEGG" id="gga:424243"/>
<dbReference type="CTD" id="55840"/>
<dbReference type="VEuPathDB" id="HostDB:geneid_424243"/>
<dbReference type="eggNOG" id="KOG4795">
    <property type="taxonomic scope" value="Eukaryota"/>
</dbReference>
<dbReference type="InParanoid" id="Q5ZHP7"/>
<dbReference type="OrthoDB" id="125903at2759"/>
<dbReference type="PhylomeDB" id="Q5ZHP7"/>
<dbReference type="Reactome" id="R-GGA-112382">
    <property type="pathway name" value="Formation of RNA Pol II elongation complex"/>
</dbReference>
<dbReference type="Reactome" id="R-GGA-674695">
    <property type="pathway name" value="RNA Polymerase II Pre-transcription Events"/>
</dbReference>
<dbReference type="Reactome" id="R-GGA-75955">
    <property type="pathway name" value="RNA Polymerase II Transcription Elongation"/>
</dbReference>
<dbReference type="PRO" id="PR:Q5ZHP7"/>
<dbReference type="Proteomes" id="UP000000539">
    <property type="component" value="Chromosome 7"/>
</dbReference>
<dbReference type="Bgee" id="ENSGALG00000011657">
    <property type="expression patterns" value="Expressed in spermatocyte and 13 other cell types or tissues"/>
</dbReference>
<dbReference type="GO" id="GO:0016607">
    <property type="term" value="C:nuclear speck"/>
    <property type="evidence" value="ECO:0007669"/>
    <property type="project" value="UniProtKB-SubCell"/>
</dbReference>
<dbReference type="GO" id="GO:0005654">
    <property type="term" value="C:nucleoplasm"/>
    <property type="evidence" value="ECO:0000250"/>
    <property type="project" value="UniProtKB"/>
</dbReference>
<dbReference type="GO" id="GO:0032783">
    <property type="term" value="C:super elongation complex"/>
    <property type="evidence" value="ECO:0007669"/>
    <property type="project" value="InterPro"/>
</dbReference>
<dbReference type="GO" id="GO:0008023">
    <property type="term" value="C:transcription elongation factor complex"/>
    <property type="evidence" value="ECO:0000318"/>
    <property type="project" value="GO_Central"/>
</dbReference>
<dbReference type="GO" id="GO:0003711">
    <property type="term" value="F:transcription elongation factor activity"/>
    <property type="evidence" value="ECO:0000318"/>
    <property type="project" value="GO_Central"/>
</dbReference>
<dbReference type="GO" id="GO:0045893">
    <property type="term" value="P:positive regulation of DNA-templated transcription"/>
    <property type="evidence" value="ECO:0000250"/>
    <property type="project" value="UniProtKB"/>
</dbReference>
<dbReference type="GO" id="GO:0006368">
    <property type="term" value="P:transcription elongation by RNA polymerase II"/>
    <property type="evidence" value="ECO:0000318"/>
    <property type="project" value="GO_Central"/>
</dbReference>
<dbReference type="InterPro" id="IPR027093">
    <property type="entry name" value="EAF_fam"/>
</dbReference>
<dbReference type="InterPro" id="IPR019194">
    <property type="entry name" value="Tscrpt_elong_fac_Eaf_N"/>
</dbReference>
<dbReference type="PANTHER" id="PTHR15970:SF7">
    <property type="entry name" value="ELL-ASSOCIATED FACTOR 2"/>
    <property type="match status" value="1"/>
</dbReference>
<dbReference type="PANTHER" id="PTHR15970">
    <property type="entry name" value="ELL-ASSOCIATED FACTOR EAF"/>
    <property type="match status" value="1"/>
</dbReference>
<dbReference type="Pfam" id="PF09816">
    <property type="entry name" value="EAF"/>
    <property type="match status" value="1"/>
</dbReference>
<proteinExistence type="evidence at transcript level"/>
<evidence type="ECO:0000250" key="1"/>
<evidence type="ECO:0000250" key="2">
    <source>
        <dbReference type="UniProtKB" id="Q96CJ1"/>
    </source>
</evidence>
<evidence type="ECO:0000256" key="3">
    <source>
        <dbReference type="SAM" id="MobiDB-lite"/>
    </source>
</evidence>
<evidence type="ECO:0000305" key="4"/>
<gene>
    <name type="primary">EAF2</name>
    <name type="ORF">RCJMB04_34m12</name>
</gene>
<organism>
    <name type="scientific">Gallus gallus</name>
    <name type="common">Chicken</name>
    <dbReference type="NCBI Taxonomy" id="9031"/>
    <lineage>
        <taxon>Eukaryota</taxon>
        <taxon>Metazoa</taxon>
        <taxon>Chordata</taxon>
        <taxon>Craniata</taxon>
        <taxon>Vertebrata</taxon>
        <taxon>Euteleostomi</taxon>
        <taxon>Archelosauria</taxon>
        <taxon>Archosauria</taxon>
        <taxon>Dinosauria</taxon>
        <taxon>Saurischia</taxon>
        <taxon>Theropoda</taxon>
        <taxon>Coelurosauria</taxon>
        <taxon>Aves</taxon>
        <taxon>Neognathae</taxon>
        <taxon>Galloanserae</taxon>
        <taxon>Galliformes</taxon>
        <taxon>Phasianidae</taxon>
        <taxon>Phasianinae</taxon>
        <taxon>Gallus</taxon>
    </lineage>
</organism>
<accession>Q5ZHP7</accession>
<sequence>MNGMAPPLFEPKERVLQLGETFEKQPRCAFHTVRYDFKPASIDTACEGDLEVGKGEQVTITLPNIEGSTPPVTVFKGSKKPYLKECILIINHDTGECRLEKLSSNITVKKIRAEGSSKVQSRIEQQQQQIRNSSKTPNNIKNSPPKDKMFPSSPMDDIERELKAEASIMDQLSSSDSSSDSKSSSSSSSSSENSSSDSEDEEARPSLPMSMPYLQPQPTLSAIPHQAVPDKDASHNRSQENSGHMMNTLRSDLQLSESGSDSDD</sequence>
<feature type="chain" id="PRO_0000130340" description="ELL-associated factor 2">
    <location>
        <begin position="1"/>
        <end position="264"/>
    </location>
</feature>
<feature type="region of interest" description="Disordered" evidence="3">
    <location>
        <begin position="114"/>
        <end position="154"/>
    </location>
</feature>
<feature type="region of interest" description="Disordered" evidence="3">
    <location>
        <begin position="169"/>
        <end position="264"/>
    </location>
</feature>
<feature type="compositionally biased region" description="Polar residues" evidence="3">
    <location>
        <begin position="117"/>
        <end position="142"/>
    </location>
</feature>
<feature type="compositionally biased region" description="Low complexity" evidence="3">
    <location>
        <begin position="173"/>
        <end position="196"/>
    </location>
</feature>
<feature type="compositionally biased region" description="Basic and acidic residues" evidence="3">
    <location>
        <begin position="228"/>
        <end position="238"/>
    </location>
</feature>
<feature type="compositionally biased region" description="Polar residues" evidence="3">
    <location>
        <begin position="239"/>
        <end position="264"/>
    </location>
</feature>
<protein>
    <recommendedName>
        <fullName>ELL-associated factor 2</fullName>
    </recommendedName>
</protein>
<comment type="function">
    <text evidence="1">May act as a transcriptional transactivator.</text>
</comment>
<comment type="subcellular location">
    <subcellularLocation>
        <location evidence="2">Nucleus speckle</location>
    </subcellularLocation>
</comment>
<comment type="similarity">
    <text evidence="4">Belongs to the EAF family.</text>
</comment>
<reference key="1">
    <citation type="journal article" date="2005" name="Genome Biol.">
        <title>Full-length cDNAs from chicken bursal lymphocytes to facilitate gene function analysis.</title>
        <authorList>
            <person name="Caldwell R.B."/>
            <person name="Kierzek A.M."/>
            <person name="Arakawa H."/>
            <person name="Bezzubov Y."/>
            <person name="Zaim J."/>
            <person name="Fiedler P."/>
            <person name="Kutter S."/>
            <person name="Blagodatski A."/>
            <person name="Kostovska D."/>
            <person name="Koter M."/>
            <person name="Plachy J."/>
            <person name="Carninci P."/>
            <person name="Hayashizaki Y."/>
            <person name="Buerstedde J.-M."/>
        </authorList>
    </citation>
    <scope>NUCLEOTIDE SEQUENCE [LARGE SCALE MRNA]</scope>
    <source>
        <strain>CB</strain>
        <tissue>Bursa of Fabricius</tissue>
    </source>
</reference>
<keyword id="KW-0010">Activator</keyword>
<keyword id="KW-0539">Nucleus</keyword>
<keyword id="KW-1185">Reference proteome</keyword>
<keyword id="KW-0804">Transcription</keyword>
<keyword id="KW-0805">Transcription regulation</keyword>
<name>EAF2_CHICK</name>